<name>Y1514_BRUC2</name>
<gene>
    <name type="ordered locus">BCAN_A1514</name>
</gene>
<accession>A9M6E4</accession>
<organism>
    <name type="scientific">Brucella canis (strain ATCC 23365 / NCTC 10854 / RM-666)</name>
    <dbReference type="NCBI Taxonomy" id="483179"/>
    <lineage>
        <taxon>Bacteria</taxon>
        <taxon>Pseudomonadati</taxon>
        <taxon>Pseudomonadota</taxon>
        <taxon>Alphaproteobacteria</taxon>
        <taxon>Hyphomicrobiales</taxon>
        <taxon>Brucellaceae</taxon>
        <taxon>Brucella/Ochrobactrum group</taxon>
        <taxon>Brucella</taxon>
    </lineage>
</organism>
<feature type="chain" id="PRO_1000082967" description="UPF0260 protein BCAN_A1514">
    <location>
        <begin position="1"/>
        <end position="152"/>
    </location>
</feature>
<protein>
    <recommendedName>
        <fullName evidence="1">UPF0260 protein BCAN_A1514</fullName>
    </recommendedName>
</protein>
<proteinExistence type="inferred from homology"/>
<reference key="1">
    <citation type="submission" date="2007-10" db="EMBL/GenBank/DDBJ databases">
        <title>Brucella canis ATCC 23365 whole genome shotgun sequencing project.</title>
        <authorList>
            <person name="Setubal J.C."/>
            <person name="Bowns C."/>
            <person name="Boyle S."/>
            <person name="Crasta O.R."/>
            <person name="Czar M.J."/>
            <person name="Dharmanolla C."/>
            <person name="Gillespie J.J."/>
            <person name="Kenyon R.W."/>
            <person name="Lu J."/>
            <person name="Mane S."/>
            <person name="Mohapatra S."/>
            <person name="Nagrani S."/>
            <person name="Purkayastha A."/>
            <person name="Rajasimha H.K."/>
            <person name="Shallom J.M."/>
            <person name="Shallom S."/>
            <person name="Shukla M."/>
            <person name="Snyder E.E."/>
            <person name="Sobral B.W."/>
            <person name="Wattam A.R."/>
            <person name="Will R."/>
            <person name="Williams K."/>
            <person name="Yoo H."/>
            <person name="Bruce D."/>
            <person name="Detter C."/>
            <person name="Munk C."/>
            <person name="Brettin T.S."/>
        </authorList>
    </citation>
    <scope>NUCLEOTIDE SEQUENCE [LARGE SCALE GENOMIC DNA]</scope>
    <source>
        <strain>ATCC 23365 / NCTC 10854 / RM-666</strain>
    </source>
</reference>
<sequence length="152" mass="17503">MTDKPFWQTKNLNQLTRSEWESLCDGCGQCCLHKLQDEDTDEIYWTSVACTLLNPETCQCRDYPNRKKTVPDCVFLTPEIVDEVDWLPVTCAYRLVAEGSDLYWWHPLVSGSPETVHEAGISVRGKVTAFDHDMQDDDDYLDHMVTPDKIAR</sequence>
<comment type="similarity">
    <text evidence="1">Belongs to the UPF0260 family.</text>
</comment>
<dbReference type="EMBL" id="CP000872">
    <property type="protein sequence ID" value="ABX62540.1"/>
    <property type="molecule type" value="Genomic_DNA"/>
</dbReference>
<dbReference type="RefSeq" id="WP_004688573.1">
    <property type="nucleotide sequence ID" value="NC_010103.1"/>
</dbReference>
<dbReference type="KEGG" id="bcs:BCAN_A1514"/>
<dbReference type="HOGENOM" id="CLU_109769_0_1_5"/>
<dbReference type="PhylomeDB" id="A9M6E4"/>
<dbReference type="Proteomes" id="UP000001385">
    <property type="component" value="Chromosome I"/>
</dbReference>
<dbReference type="HAMAP" id="MF_00676">
    <property type="entry name" value="UPF0260"/>
    <property type="match status" value="1"/>
</dbReference>
<dbReference type="InterPro" id="IPR005358">
    <property type="entry name" value="Puta_zinc/iron-chelating_dom"/>
</dbReference>
<dbReference type="InterPro" id="IPR008228">
    <property type="entry name" value="UCP006173"/>
</dbReference>
<dbReference type="NCBIfam" id="NF003501">
    <property type="entry name" value="PRK05170.1-5"/>
    <property type="match status" value="1"/>
</dbReference>
<dbReference type="NCBIfam" id="NF003507">
    <property type="entry name" value="PRK05170.2-5"/>
    <property type="match status" value="1"/>
</dbReference>
<dbReference type="PANTHER" id="PTHR37421">
    <property type="entry name" value="UPF0260 PROTEIN YCGN"/>
    <property type="match status" value="1"/>
</dbReference>
<dbReference type="PANTHER" id="PTHR37421:SF1">
    <property type="entry name" value="UPF0260 PROTEIN YCGN"/>
    <property type="match status" value="1"/>
</dbReference>
<dbReference type="Pfam" id="PF03692">
    <property type="entry name" value="CxxCxxCC"/>
    <property type="match status" value="1"/>
</dbReference>
<dbReference type="PIRSF" id="PIRSF006173">
    <property type="entry name" value="UCP006173"/>
    <property type="match status" value="1"/>
</dbReference>
<evidence type="ECO:0000255" key="1">
    <source>
        <dbReference type="HAMAP-Rule" id="MF_00676"/>
    </source>
</evidence>
<keyword id="KW-1185">Reference proteome</keyword>